<accession>Q74NA6</accession>
<gene>
    <name evidence="1" type="primary">cca</name>
    <name type="ordered locus">NEQ152</name>
</gene>
<organism>
    <name type="scientific">Nanoarchaeum equitans (strain Kin4-M)</name>
    <dbReference type="NCBI Taxonomy" id="228908"/>
    <lineage>
        <taxon>Archaea</taxon>
        <taxon>Nanobdellota</taxon>
        <taxon>Candidatus Nanoarchaeia</taxon>
        <taxon>Nanoarchaeales</taxon>
        <taxon>Nanoarchaeaceae</taxon>
        <taxon>Nanoarchaeum</taxon>
    </lineage>
</organism>
<proteinExistence type="inferred from homology"/>
<name>CCA_NANEQ</name>
<comment type="function">
    <text evidence="1">Catalyzes the addition and repair of the essential 3'-terminal CCA sequence in tRNAs without using a nucleic acid template. Adds these three nucleotides in the order of C, C, and A to the tRNA nucleotide-73, using CTP and ATP as substrates and producing inorganic pyrophosphate. tRNA 3'-terminal CCA addition is required both for tRNA processing and repair. Also involved in tRNA surveillance by mediating tandem CCA addition to generate a CCACCA at the 3' terminus of unstable tRNAs. While stable tRNAs receive only 3'-terminal CCA, unstable tRNAs are marked with CCACCA and rapidly degraded.</text>
</comment>
<comment type="catalytic activity">
    <reaction evidence="1">
        <text>a tRNA precursor + 2 CTP + ATP = a tRNA with a 3' CCA end + 3 diphosphate</text>
        <dbReference type="Rhea" id="RHEA:14433"/>
        <dbReference type="Rhea" id="RHEA-COMP:10465"/>
        <dbReference type="Rhea" id="RHEA-COMP:10468"/>
        <dbReference type="ChEBI" id="CHEBI:30616"/>
        <dbReference type="ChEBI" id="CHEBI:33019"/>
        <dbReference type="ChEBI" id="CHEBI:37563"/>
        <dbReference type="ChEBI" id="CHEBI:74896"/>
        <dbReference type="ChEBI" id="CHEBI:83071"/>
        <dbReference type="EC" id="2.7.7.72"/>
    </reaction>
</comment>
<comment type="catalytic activity">
    <reaction evidence="1">
        <text>a tRNA with a 3' CCA end + 2 CTP + ATP = a tRNA with a 3' CCACCA end + 3 diphosphate</text>
        <dbReference type="Rhea" id="RHEA:76235"/>
        <dbReference type="Rhea" id="RHEA-COMP:10468"/>
        <dbReference type="Rhea" id="RHEA-COMP:18655"/>
        <dbReference type="ChEBI" id="CHEBI:30616"/>
        <dbReference type="ChEBI" id="CHEBI:33019"/>
        <dbReference type="ChEBI" id="CHEBI:37563"/>
        <dbReference type="ChEBI" id="CHEBI:83071"/>
        <dbReference type="ChEBI" id="CHEBI:195187"/>
    </reaction>
    <physiologicalReaction direction="left-to-right" evidence="1">
        <dbReference type="Rhea" id="RHEA:76236"/>
    </physiologicalReaction>
</comment>
<comment type="cofactor">
    <cofactor evidence="1">
        <name>Mg(2+)</name>
        <dbReference type="ChEBI" id="CHEBI:18420"/>
    </cofactor>
</comment>
<comment type="subunit">
    <text evidence="1">Homodimer.</text>
</comment>
<comment type="miscellaneous">
    <text evidence="1">A single active site specifically recognizes both ATP and CTP and is responsible for their addition.</text>
</comment>
<comment type="similarity">
    <text evidence="1">Belongs to the tRNA nucleotidyltransferase/poly(A) polymerase family. Archaeal CCA-adding enzyme subfamily.</text>
</comment>
<evidence type="ECO:0000255" key="1">
    <source>
        <dbReference type="HAMAP-Rule" id="MF_01264"/>
    </source>
</evidence>
<sequence>MYFKPNFEQFLPKKEDYEKAKKALDYIIPILEKTPHIYDVFVGGSYAKGTWLGRDIDIFVRFPKKYKGQNISIYIEQTLKEHNVPYIKLHGSRDYFQTFYEGLKIEIVPILKLDSPLEREFVTDISQFHVEWVKKNIKGLENDAKYFKIFNKLINTYGAESYLGGLSGYACEILTIHYKGFTNLLKGILKWKPKVFIDIEKHYSNIKEAINELGKDKTASPLILIDPVDKTRNVAASLSYKNFALIIANSYLYLNNNILYKINKSDFETMLEITFRVEETKEDIKNAKISRLTRKIVNYLEKNGIEVYAYTIDFDKNKSYLWVCCEKITIKTKHLGPPAWVNLDKFLEKHNKFFIREDGRLYTIINKTFSVYDIKKVYPEIESIKFLNNNPT</sequence>
<reference key="1">
    <citation type="journal article" date="2003" name="Proc. Natl. Acad. Sci. U.S.A.">
        <title>The genome of Nanoarchaeum equitans: insights into early archaeal evolution and derived parasitism.</title>
        <authorList>
            <person name="Waters E."/>
            <person name="Hohn M.J."/>
            <person name="Ahel I."/>
            <person name="Graham D.E."/>
            <person name="Adams M.D."/>
            <person name="Barnstead M."/>
            <person name="Beeson K.Y."/>
            <person name="Bibbs L."/>
            <person name="Bolanos R."/>
            <person name="Keller M."/>
            <person name="Kretz K."/>
            <person name="Lin X."/>
            <person name="Mathur E."/>
            <person name="Ni J."/>
            <person name="Podar M."/>
            <person name="Richardson T."/>
            <person name="Sutton G.G."/>
            <person name="Simon M."/>
            <person name="Soell D."/>
            <person name="Stetter K.O."/>
            <person name="Short J.M."/>
            <person name="Noorderwier M."/>
        </authorList>
    </citation>
    <scope>NUCLEOTIDE SEQUENCE [LARGE SCALE GENOMIC DNA]</scope>
    <source>
        <strain>Kin4-M</strain>
    </source>
</reference>
<dbReference type="EC" id="2.7.7.72" evidence="1"/>
<dbReference type="EMBL" id="AE017199">
    <property type="protein sequence ID" value="AAR39007.1"/>
    <property type="molecule type" value="Genomic_DNA"/>
</dbReference>
<dbReference type="SMR" id="Q74NA6"/>
<dbReference type="STRING" id="228908.NEQ152"/>
<dbReference type="EnsemblBacteria" id="AAR39007">
    <property type="protein sequence ID" value="AAR39007"/>
    <property type="gene ID" value="NEQ152"/>
</dbReference>
<dbReference type="KEGG" id="neq:NEQ152"/>
<dbReference type="PATRIC" id="fig|228908.8.peg.155"/>
<dbReference type="HOGENOM" id="CLU_044679_1_0_2"/>
<dbReference type="Proteomes" id="UP000000578">
    <property type="component" value="Chromosome"/>
</dbReference>
<dbReference type="GO" id="GO:0005524">
    <property type="term" value="F:ATP binding"/>
    <property type="evidence" value="ECO:0007669"/>
    <property type="project" value="UniProtKB-UniRule"/>
</dbReference>
<dbReference type="GO" id="GO:0004810">
    <property type="term" value="F:CCA tRNA nucleotidyltransferase activity"/>
    <property type="evidence" value="ECO:0007669"/>
    <property type="project" value="UniProtKB-UniRule"/>
</dbReference>
<dbReference type="GO" id="GO:0000287">
    <property type="term" value="F:magnesium ion binding"/>
    <property type="evidence" value="ECO:0007669"/>
    <property type="project" value="UniProtKB-UniRule"/>
</dbReference>
<dbReference type="GO" id="GO:0000049">
    <property type="term" value="F:tRNA binding"/>
    <property type="evidence" value="ECO:0007669"/>
    <property type="project" value="UniProtKB-UniRule"/>
</dbReference>
<dbReference type="GO" id="GO:0042245">
    <property type="term" value="P:RNA repair"/>
    <property type="evidence" value="ECO:0007669"/>
    <property type="project" value="UniProtKB-KW"/>
</dbReference>
<dbReference type="GO" id="GO:0001680">
    <property type="term" value="P:tRNA 3'-terminal CCA addition"/>
    <property type="evidence" value="ECO:0007669"/>
    <property type="project" value="UniProtKB-UniRule"/>
</dbReference>
<dbReference type="CDD" id="cd05400">
    <property type="entry name" value="NT_2-5OAS_ClassI-CCAase"/>
    <property type="match status" value="1"/>
</dbReference>
<dbReference type="Gene3D" id="3.30.460.10">
    <property type="entry name" value="Beta Polymerase, domain 2"/>
    <property type="match status" value="1"/>
</dbReference>
<dbReference type="Gene3D" id="1.10.1410.30">
    <property type="entry name" value="CCA tRNA nucleotidyltransferase, domain 2"/>
    <property type="match status" value="1"/>
</dbReference>
<dbReference type="Gene3D" id="3.30.70.590">
    <property type="entry name" value="Poly(A) polymerase predicted RNA binding domain"/>
    <property type="match status" value="1"/>
</dbReference>
<dbReference type="HAMAP" id="MF_01264">
    <property type="entry name" value="CCA_arch"/>
    <property type="match status" value="1"/>
</dbReference>
<dbReference type="InterPro" id="IPR048833">
    <property type="entry name" value="CAA_C"/>
</dbReference>
<dbReference type="InterPro" id="IPR008229">
    <property type="entry name" value="CCA-adding_arc"/>
</dbReference>
<dbReference type="InterPro" id="IPR042090">
    <property type="entry name" value="CCA_tRNA_nucleotrans_2"/>
</dbReference>
<dbReference type="InterPro" id="IPR006116">
    <property type="entry name" value="NT_2-5OAS_ClassI-CCAase"/>
</dbReference>
<dbReference type="InterPro" id="IPR043519">
    <property type="entry name" value="NT_sf"/>
</dbReference>
<dbReference type="InterPro" id="IPR011068">
    <property type="entry name" value="NuclTrfase_I-like_C"/>
</dbReference>
<dbReference type="InterPro" id="IPR002934">
    <property type="entry name" value="Polymerase_NTP_transf_dom"/>
</dbReference>
<dbReference type="InterPro" id="IPR015329">
    <property type="entry name" value="tRNA_NucTransf2"/>
</dbReference>
<dbReference type="NCBIfam" id="TIGR03671">
    <property type="entry name" value="cca_archaeal"/>
    <property type="match status" value="1"/>
</dbReference>
<dbReference type="PANTHER" id="PTHR39643">
    <property type="entry name" value="CCA-ADDING ENZYME"/>
    <property type="match status" value="1"/>
</dbReference>
<dbReference type="PANTHER" id="PTHR39643:SF1">
    <property type="entry name" value="CCA-ADDING ENZYME"/>
    <property type="match status" value="1"/>
</dbReference>
<dbReference type="Pfam" id="PF21133">
    <property type="entry name" value="CAA_C"/>
    <property type="match status" value="1"/>
</dbReference>
<dbReference type="Pfam" id="PF01909">
    <property type="entry name" value="NTP_transf_2"/>
    <property type="match status" value="1"/>
</dbReference>
<dbReference type="Pfam" id="PF09249">
    <property type="entry name" value="tRNA_NucTransf2"/>
    <property type="match status" value="1"/>
</dbReference>
<dbReference type="PIRSF" id="PIRSF005335">
    <property type="entry name" value="CCA_arch"/>
    <property type="match status" value="1"/>
</dbReference>
<dbReference type="SUPFAM" id="SSF81301">
    <property type="entry name" value="Nucleotidyltransferase"/>
    <property type="match status" value="1"/>
</dbReference>
<dbReference type="SUPFAM" id="SSF55003">
    <property type="entry name" value="PAP/Archaeal CCA-adding enzyme, C-terminal domain"/>
    <property type="match status" value="1"/>
</dbReference>
<dbReference type="SUPFAM" id="SSF81631">
    <property type="entry name" value="PAP/OAS1 substrate-binding domain"/>
    <property type="match status" value="1"/>
</dbReference>
<feature type="chain" id="PRO_0000139074" description="CCA-adding enzyme">
    <location>
        <begin position="1"/>
        <end position="392"/>
    </location>
</feature>
<feature type="binding site" evidence="1">
    <location>
        <position position="45"/>
    </location>
    <ligand>
        <name>ATP</name>
        <dbReference type="ChEBI" id="CHEBI:30616"/>
    </ligand>
</feature>
<feature type="binding site" evidence="1">
    <location>
        <position position="45"/>
    </location>
    <ligand>
        <name>CTP</name>
        <dbReference type="ChEBI" id="CHEBI:37563"/>
    </ligand>
</feature>
<feature type="binding site" evidence="1">
    <location>
        <position position="48"/>
    </location>
    <ligand>
        <name>ATP</name>
        <dbReference type="ChEBI" id="CHEBI:30616"/>
    </ligand>
</feature>
<feature type="binding site" evidence="1">
    <location>
        <position position="48"/>
    </location>
    <ligand>
        <name>CTP</name>
        <dbReference type="ChEBI" id="CHEBI:37563"/>
    </ligand>
</feature>
<feature type="binding site" evidence="1">
    <location>
        <position position="55"/>
    </location>
    <ligand>
        <name>Mg(2+)</name>
        <dbReference type="ChEBI" id="CHEBI:18420"/>
    </ligand>
</feature>
<feature type="binding site" evidence="1">
    <location>
        <position position="57"/>
    </location>
    <ligand>
        <name>Mg(2+)</name>
        <dbReference type="ChEBI" id="CHEBI:18420"/>
    </ligand>
</feature>
<feature type="binding site" evidence="1">
    <location>
        <position position="106"/>
    </location>
    <ligand>
        <name>Mg(2+)</name>
        <dbReference type="ChEBI" id="CHEBI:18420"/>
    </ligand>
</feature>
<feature type="binding site" evidence="1">
    <location>
        <position position="129"/>
    </location>
    <ligand>
        <name>ATP</name>
        <dbReference type="ChEBI" id="CHEBI:30616"/>
    </ligand>
</feature>
<feature type="binding site" evidence="1">
    <location>
        <position position="129"/>
    </location>
    <ligand>
        <name>CTP</name>
        <dbReference type="ChEBI" id="CHEBI:37563"/>
    </ligand>
</feature>
<feature type="binding site" evidence="1">
    <location>
        <position position="148"/>
    </location>
    <ligand>
        <name>ATP</name>
        <dbReference type="ChEBI" id="CHEBI:30616"/>
    </ligand>
</feature>
<feature type="binding site" evidence="1">
    <location>
        <position position="148"/>
    </location>
    <ligand>
        <name>CTP</name>
        <dbReference type="ChEBI" id="CHEBI:37563"/>
    </ligand>
</feature>
<feature type="binding site" evidence="1">
    <location>
        <position position="157"/>
    </location>
    <ligand>
        <name>ATP</name>
        <dbReference type="ChEBI" id="CHEBI:30616"/>
    </ligand>
</feature>
<feature type="binding site" evidence="1">
    <location>
        <position position="157"/>
    </location>
    <ligand>
        <name>CTP</name>
        <dbReference type="ChEBI" id="CHEBI:37563"/>
    </ligand>
</feature>
<keyword id="KW-0067">ATP-binding</keyword>
<keyword id="KW-0460">Magnesium</keyword>
<keyword id="KW-0479">Metal-binding</keyword>
<keyword id="KW-0547">Nucleotide-binding</keyword>
<keyword id="KW-0548">Nucleotidyltransferase</keyword>
<keyword id="KW-1185">Reference proteome</keyword>
<keyword id="KW-0692">RNA repair</keyword>
<keyword id="KW-0694">RNA-binding</keyword>
<keyword id="KW-0808">Transferase</keyword>
<keyword id="KW-0819">tRNA processing</keyword>
<protein>
    <recommendedName>
        <fullName evidence="1">CCA-adding enzyme</fullName>
        <ecNumber evidence="1">2.7.7.72</ecNumber>
    </recommendedName>
    <alternativeName>
        <fullName evidence="1">CCA tRNA nucleotidyltransferase</fullName>
    </alternativeName>
    <alternativeName>
        <fullName evidence="1">tRNA CCA-pyrophosphorylase</fullName>
    </alternativeName>
    <alternativeName>
        <fullName evidence="1">tRNA adenylyl-/cytidylyl- transferase</fullName>
    </alternativeName>
    <alternativeName>
        <fullName evidence="1">tRNA nucleotidyltransferase</fullName>
    </alternativeName>
    <alternativeName>
        <fullName evidence="1">tRNA-NT</fullName>
    </alternativeName>
</protein>